<sequence length="279" mass="31493">MTQHFPTRQLRFFLTAPTPCPYLPGREERKVFAHLPLSDGPIVNDSLTQVGFRRSQNIAYRPACETCRACQSARAPATEYILSRSERKILGRNDDLERHLVEAEATLEQFELLRRYLLTRHADGGMAEMTWPDYVAMVEDTAVRTHLIEYRRKSLDRGPGDLVACVLVDVLADGLSLVYSFYEPDQPRRSLGSFIILDHIVQAQQNALPYVYLGYWVPGSEKMAYKARFSPLEILKPGGWSLMSARERGARPPRGPGALKDACDLPLSDAQPADIEDLD</sequence>
<organism>
    <name type="scientific">Caulobacter vibrioides (strain ATCC 19089 / CIP 103742 / CB 15)</name>
    <name type="common">Caulobacter crescentus</name>
    <dbReference type="NCBI Taxonomy" id="190650"/>
    <lineage>
        <taxon>Bacteria</taxon>
        <taxon>Pseudomonadati</taxon>
        <taxon>Pseudomonadota</taxon>
        <taxon>Alphaproteobacteria</taxon>
        <taxon>Caulobacterales</taxon>
        <taxon>Caulobacteraceae</taxon>
        <taxon>Caulobacter</taxon>
    </lineage>
</organism>
<gene>
    <name evidence="1" type="primary">bpt</name>
    <name type="ordered locus">CC_1572</name>
</gene>
<evidence type="ECO:0000255" key="1">
    <source>
        <dbReference type="HAMAP-Rule" id="MF_00689"/>
    </source>
</evidence>
<evidence type="ECO:0000256" key="2">
    <source>
        <dbReference type="SAM" id="MobiDB-lite"/>
    </source>
</evidence>
<keyword id="KW-0012">Acyltransferase</keyword>
<keyword id="KW-0963">Cytoplasm</keyword>
<keyword id="KW-1185">Reference proteome</keyword>
<keyword id="KW-0808">Transferase</keyword>
<feature type="chain" id="PRO_0000195102" description="Aspartate/glutamate leucyltransferase">
    <location>
        <begin position="1"/>
        <end position="279"/>
    </location>
</feature>
<feature type="region of interest" description="Disordered" evidence="2">
    <location>
        <begin position="245"/>
        <end position="279"/>
    </location>
</feature>
<dbReference type="EC" id="2.3.2.29" evidence="1"/>
<dbReference type="EMBL" id="AE005673">
    <property type="protein sequence ID" value="AAK23551.1"/>
    <property type="molecule type" value="Genomic_DNA"/>
</dbReference>
<dbReference type="PIR" id="C87444">
    <property type="entry name" value="C87444"/>
</dbReference>
<dbReference type="RefSeq" id="NP_420383.1">
    <property type="nucleotide sequence ID" value="NC_002696.2"/>
</dbReference>
<dbReference type="RefSeq" id="WP_010919446.1">
    <property type="nucleotide sequence ID" value="NC_002696.2"/>
</dbReference>
<dbReference type="SMR" id="Q9A7Z5"/>
<dbReference type="STRING" id="190650.CC_1572"/>
<dbReference type="EnsemblBacteria" id="AAK23551">
    <property type="protein sequence ID" value="AAK23551"/>
    <property type="gene ID" value="CC_1572"/>
</dbReference>
<dbReference type="KEGG" id="ccr:CC_1572"/>
<dbReference type="PATRIC" id="fig|190650.5.peg.1600"/>
<dbReference type="eggNOG" id="COG2935">
    <property type="taxonomic scope" value="Bacteria"/>
</dbReference>
<dbReference type="HOGENOM" id="CLU_077607_1_0_5"/>
<dbReference type="BioCyc" id="CAULO:CC1572-MONOMER"/>
<dbReference type="Proteomes" id="UP000001816">
    <property type="component" value="Chromosome"/>
</dbReference>
<dbReference type="GO" id="GO:0005737">
    <property type="term" value="C:cytoplasm"/>
    <property type="evidence" value="ECO:0007669"/>
    <property type="project" value="UniProtKB-SubCell"/>
</dbReference>
<dbReference type="GO" id="GO:0004057">
    <property type="term" value="F:arginyl-tRNA--protein transferase activity"/>
    <property type="evidence" value="ECO:0007669"/>
    <property type="project" value="InterPro"/>
</dbReference>
<dbReference type="GO" id="GO:0008914">
    <property type="term" value="F:leucyl-tRNA--protein transferase activity"/>
    <property type="evidence" value="ECO:0007669"/>
    <property type="project" value="UniProtKB-UniRule"/>
</dbReference>
<dbReference type="GO" id="GO:0071596">
    <property type="term" value="P:ubiquitin-dependent protein catabolic process via the N-end rule pathway"/>
    <property type="evidence" value="ECO:0007669"/>
    <property type="project" value="InterPro"/>
</dbReference>
<dbReference type="HAMAP" id="MF_00689">
    <property type="entry name" value="Bpt"/>
    <property type="match status" value="1"/>
</dbReference>
<dbReference type="InterPro" id="IPR016181">
    <property type="entry name" value="Acyl_CoA_acyltransferase"/>
</dbReference>
<dbReference type="InterPro" id="IPR017138">
    <property type="entry name" value="Asp_Glu_LeuTrfase"/>
</dbReference>
<dbReference type="InterPro" id="IPR030700">
    <property type="entry name" value="N-end_Aminoacyl_Trfase"/>
</dbReference>
<dbReference type="InterPro" id="IPR007472">
    <property type="entry name" value="N-end_Aminoacyl_Trfase_C"/>
</dbReference>
<dbReference type="InterPro" id="IPR007471">
    <property type="entry name" value="N-end_Aminoacyl_Trfase_N"/>
</dbReference>
<dbReference type="NCBIfam" id="NF002342">
    <property type="entry name" value="PRK01305.1-3"/>
    <property type="match status" value="1"/>
</dbReference>
<dbReference type="NCBIfam" id="NF002343">
    <property type="entry name" value="PRK01305.1-4"/>
    <property type="match status" value="1"/>
</dbReference>
<dbReference type="NCBIfam" id="NF002346">
    <property type="entry name" value="PRK01305.2-3"/>
    <property type="match status" value="1"/>
</dbReference>
<dbReference type="PANTHER" id="PTHR21367">
    <property type="entry name" value="ARGININE-TRNA-PROTEIN TRANSFERASE 1"/>
    <property type="match status" value="1"/>
</dbReference>
<dbReference type="PANTHER" id="PTHR21367:SF1">
    <property type="entry name" value="ARGINYL-TRNA--PROTEIN TRANSFERASE 1"/>
    <property type="match status" value="1"/>
</dbReference>
<dbReference type="Pfam" id="PF04377">
    <property type="entry name" value="ATE_C"/>
    <property type="match status" value="1"/>
</dbReference>
<dbReference type="Pfam" id="PF04376">
    <property type="entry name" value="ATE_N"/>
    <property type="match status" value="1"/>
</dbReference>
<dbReference type="PIRSF" id="PIRSF037208">
    <property type="entry name" value="ATE_pro_prd"/>
    <property type="match status" value="1"/>
</dbReference>
<dbReference type="SUPFAM" id="SSF55729">
    <property type="entry name" value="Acyl-CoA N-acyltransferases (Nat)"/>
    <property type="match status" value="1"/>
</dbReference>
<comment type="function">
    <text evidence="1">Functions in the N-end rule pathway of protein degradation where it conjugates Leu from its aminoacyl-tRNA to the N-termini of proteins containing an N-terminal aspartate or glutamate.</text>
</comment>
<comment type="catalytic activity">
    <reaction evidence="1">
        <text>N-terminal L-glutamyl-[protein] + L-leucyl-tRNA(Leu) = N-terminal L-leucyl-L-glutamyl-[protein] + tRNA(Leu) + H(+)</text>
        <dbReference type="Rhea" id="RHEA:50412"/>
        <dbReference type="Rhea" id="RHEA-COMP:9613"/>
        <dbReference type="Rhea" id="RHEA-COMP:9622"/>
        <dbReference type="Rhea" id="RHEA-COMP:12664"/>
        <dbReference type="Rhea" id="RHEA-COMP:12668"/>
        <dbReference type="ChEBI" id="CHEBI:15378"/>
        <dbReference type="ChEBI" id="CHEBI:64721"/>
        <dbReference type="ChEBI" id="CHEBI:78442"/>
        <dbReference type="ChEBI" id="CHEBI:78494"/>
        <dbReference type="ChEBI" id="CHEBI:133041"/>
        <dbReference type="EC" id="2.3.2.29"/>
    </reaction>
</comment>
<comment type="catalytic activity">
    <reaction evidence="1">
        <text>N-terminal L-aspartyl-[protein] + L-leucyl-tRNA(Leu) = N-terminal L-leucyl-L-aspartyl-[protein] + tRNA(Leu) + H(+)</text>
        <dbReference type="Rhea" id="RHEA:50420"/>
        <dbReference type="Rhea" id="RHEA-COMP:9613"/>
        <dbReference type="Rhea" id="RHEA-COMP:9622"/>
        <dbReference type="Rhea" id="RHEA-COMP:12669"/>
        <dbReference type="Rhea" id="RHEA-COMP:12674"/>
        <dbReference type="ChEBI" id="CHEBI:15378"/>
        <dbReference type="ChEBI" id="CHEBI:64720"/>
        <dbReference type="ChEBI" id="CHEBI:78442"/>
        <dbReference type="ChEBI" id="CHEBI:78494"/>
        <dbReference type="ChEBI" id="CHEBI:133042"/>
        <dbReference type="EC" id="2.3.2.29"/>
    </reaction>
</comment>
<comment type="subcellular location">
    <subcellularLocation>
        <location evidence="1">Cytoplasm</location>
    </subcellularLocation>
</comment>
<comment type="similarity">
    <text evidence="1">Belongs to the R-transferase family. Bpt subfamily.</text>
</comment>
<accession>Q9A7Z5</accession>
<protein>
    <recommendedName>
        <fullName evidence="1">Aspartate/glutamate leucyltransferase</fullName>
        <ecNumber evidence="1">2.3.2.29</ecNumber>
    </recommendedName>
</protein>
<name>BPT_CAUVC</name>
<proteinExistence type="inferred from homology"/>
<reference key="1">
    <citation type="journal article" date="2001" name="Proc. Natl. Acad. Sci. U.S.A.">
        <title>Complete genome sequence of Caulobacter crescentus.</title>
        <authorList>
            <person name="Nierman W.C."/>
            <person name="Feldblyum T.V."/>
            <person name="Laub M.T."/>
            <person name="Paulsen I.T."/>
            <person name="Nelson K.E."/>
            <person name="Eisen J.A."/>
            <person name="Heidelberg J.F."/>
            <person name="Alley M.R.K."/>
            <person name="Ohta N."/>
            <person name="Maddock J.R."/>
            <person name="Potocka I."/>
            <person name="Nelson W.C."/>
            <person name="Newton A."/>
            <person name="Stephens C."/>
            <person name="Phadke N.D."/>
            <person name="Ely B."/>
            <person name="DeBoy R.T."/>
            <person name="Dodson R.J."/>
            <person name="Durkin A.S."/>
            <person name="Gwinn M.L."/>
            <person name="Haft D.H."/>
            <person name="Kolonay J.F."/>
            <person name="Smit J."/>
            <person name="Craven M.B."/>
            <person name="Khouri H.M."/>
            <person name="Shetty J."/>
            <person name="Berry K.J."/>
            <person name="Utterback T.R."/>
            <person name="Tran K."/>
            <person name="Wolf A.M."/>
            <person name="Vamathevan J.J."/>
            <person name="Ermolaeva M.D."/>
            <person name="White O."/>
            <person name="Salzberg S.L."/>
            <person name="Venter J.C."/>
            <person name="Shapiro L."/>
            <person name="Fraser C.M."/>
        </authorList>
    </citation>
    <scope>NUCLEOTIDE SEQUENCE [LARGE SCALE GENOMIC DNA]</scope>
    <source>
        <strain>ATCC 19089 / CIP 103742 / CB 15</strain>
    </source>
</reference>